<keyword id="KW-0113">Calvin cycle</keyword>
<keyword id="KW-0120">Carbon dioxide fixation</keyword>
<keyword id="KW-0150">Chloroplast</keyword>
<keyword id="KW-0601">Photorespiration</keyword>
<keyword id="KW-0602">Photosynthesis</keyword>
<keyword id="KW-0934">Plastid</keyword>
<keyword id="KW-0809">Transit peptide</keyword>
<evidence type="ECO:0000255" key="1">
    <source>
        <dbReference type="HAMAP-Rule" id="MF_00860"/>
    </source>
</evidence>
<gene>
    <name evidence="1" type="primary">RBCS</name>
</gene>
<comment type="function">
    <text evidence="1">RuBisCO catalyzes two reactions: the carboxylation of D-ribulose 1,5-bisphosphate, the primary event in carbon dioxide fixation, as well as the oxidative fragmentation of the pentose substrate. Both reactions occur simultaneously and in competition at the same active site. Although the small subunit is not catalytic it is essential for maximal activity.</text>
</comment>
<comment type="subunit">
    <text evidence="1">Heterohexadecamer of 8 large and 8 small subunits.</text>
</comment>
<comment type="subcellular location">
    <subcellularLocation>
        <location evidence="1">Plastid</location>
        <location evidence="1">Chloroplast</location>
    </subcellularLocation>
</comment>
<comment type="miscellaneous">
    <text evidence="1">The basic functional RuBisCO is composed of a large chain homodimer in a 'head-to-tail' conformation. In form I RuBisCO this homodimer is arranged in a barrel-like tetramer with the small subunits forming a tetrameric 'cap' on each end of the 'barrel'.</text>
</comment>
<comment type="similarity">
    <text evidence="1">Belongs to the RuBisCO small chain family.</text>
</comment>
<protein>
    <recommendedName>
        <fullName evidence="1">Ribulose bisphosphate carboxylase small subunit, chloroplastic</fullName>
        <shortName evidence="1">RuBisCO small subunit</shortName>
    </recommendedName>
</protein>
<organism>
    <name type="scientific">Pyrus pyrifolia</name>
    <name type="common">Chinese pear</name>
    <name type="synonym">Pyrus serotina</name>
    <dbReference type="NCBI Taxonomy" id="3767"/>
    <lineage>
        <taxon>Eukaryota</taxon>
        <taxon>Viridiplantae</taxon>
        <taxon>Streptophyta</taxon>
        <taxon>Embryophyta</taxon>
        <taxon>Tracheophyta</taxon>
        <taxon>Spermatophyta</taxon>
        <taxon>Magnoliopsida</taxon>
        <taxon>eudicotyledons</taxon>
        <taxon>Gunneridae</taxon>
        <taxon>Pentapetalae</taxon>
        <taxon>rosids</taxon>
        <taxon>fabids</taxon>
        <taxon>Rosales</taxon>
        <taxon>Rosaceae</taxon>
        <taxon>Amygdaloideae</taxon>
        <taxon>Maleae</taxon>
        <taxon>Pyrus</taxon>
    </lineage>
</organism>
<name>RBS_PYRPY</name>
<dbReference type="EMBL" id="D00572">
    <property type="protein sequence ID" value="BAA00450.1"/>
    <property type="molecule type" value="mRNA"/>
</dbReference>
<dbReference type="SMR" id="P24007"/>
<dbReference type="GO" id="GO:0009507">
    <property type="term" value="C:chloroplast"/>
    <property type="evidence" value="ECO:0007669"/>
    <property type="project" value="UniProtKB-SubCell"/>
</dbReference>
<dbReference type="GO" id="GO:0016984">
    <property type="term" value="F:ribulose-bisphosphate carboxylase activity"/>
    <property type="evidence" value="ECO:0007669"/>
    <property type="project" value="UniProtKB-UniRule"/>
</dbReference>
<dbReference type="GO" id="GO:0009853">
    <property type="term" value="P:photorespiration"/>
    <property type="evidence" value="ECO:0007669"/>
    <property type="project" value="UniProtKB-KW"/>
</dbReference>
<dbReference type="GO" id="GO:0019253">
    <property type="term" value="P:reductive pentose-phosphate cycle"/>
    <property type="evidence" value="ECO:0007669"/>
    <property type="project" value="UniProtKB-UniRule"/>
</dbReference>
<dbReference type="CDD" id="cd03527">
    <property type="entry name" value="RuBisCO_small"/>
    <property type="match status" value="1"/>
</dbReference>
<dbReference type="FunFam" id="3.30.190.10:FF:000001">
    <property type="entry name" value="Ribulose bisphosphate carboxylase small chain, chloroplastic"/>
    <property type="match status" value="1"/>
</dbReference>
<dbReference type="Gene3D" id="3.30.190.10">
    <property type="entry name" value="Ribulose bisphosphate carboxylase, small subunit"/>
    <property type="match status" value="1"/>
</dbReference>
<dbReference type="HAMAP" id="MF_00859">
    <property type="entry name" value="RuBisCO_S_bact"/>
    <property type="match status" value="1"/>
</dbReference>
<dbReference type="InterPro" id="IPR024681">
    <property type="entry name" value="RuBisCO_ssu"/>
</dbReference>
<dbReference type="InterPro" id="IPR000894">
    <property type="entry name" value="RuBisCO_ssu_dom"/>
</dbReference>
<dbReference type="InterPro" id="IPR024680">
    <property type="entry name" value="RuBisCO_ssu_N"/>
</dbReference>
<dbReference type="InterPro" id="IPR036385">
    <property type="entry name" value="RuBisCO_ssu_sf"/>
</dbReference>
<dbReference type="PANTHER" id="PTHR31262">
    <property type="entry name" value="RIBULOSE BISPHOSPHATE CARBOXYLASE SMALL CHAIN 1, CHLOROPLASTIC"/>
    <property type="match status" value="1"/>
</dbReference>
<dbReference type="PANTHER" id="PTHR31262:SF10">
    <property type="entry name" value="RIBULOSE BISPHOSPHATE CARBOXYLASE SMALL SUBUNIT 1A, CHLOROPLASTIC-RELATED"/>
    <property type="match status" value="1"/>
</dbReference>
<dbReference type="Pfam" id="PF12338">
    <property type="entry name" value="RbcS"/>
    <property type="match status" value="1"/>
</dbReference>
<dbReference type="Pfam" id="PF00101">
    <property type="entry name" value="RuBisCO_small"/>
    <property type="match status" value="1"/>
</dbReference>
<dbReference type="PRINTS" id="PR00152">
    <property type="entry name" value="RUBISCOSMALL"/>
</dbReference>
<dbReference type="SMART" id="SM00961">
    <property type="entry name" value="RuBisCO_small"/>
    <property type="match status" value="1"/>
</dbReference>
<dbReference type="SUPFAM" id="SSF55239">
    <property type="entry name" value="RuBisCO, small subunit"/>
    <property type="match status" value="1"/>
</dbReference>
<reference key="1">
    <citation type="submission" date="1991-03" db="EMBL/GenBank/DDBJ databases">
        <authorList>
            <person name="Kano-Murakami Y."/>
        </authorList>
    </citation>
    <scope>NUCLEOTIDE SEQUENCE [MRNA]</scope>
</reference>
<feature type="transit peptide" description="Chloroplast" evidence="1">
    <location>
        <begin position="1"/>
        <end position="59"/>
    </location>
</feature>
<feature type="chain" id="PRO_0000031546" description="Ribulose bisphosphate carboxylase small subunit, chloroplastic" evidence="1">
    <location>
        <begin position="60"/>
        <end position="183"/>
    </location>
</feature>
<sequence>MASSMISSGTVATVSADRPAPAQARMVAPFNGLKSSSAFPVTRKSNDITSIASNGGRVQCMQVWPPLGLKKFETLSYLPPLSSESLAKEVDYLLRKNWVPCLEFELETGFVYRENHRSPGYYDGRYWTMWKLPMFGCTDSSQVLKELEEAKKAYPQSFIRIIGFDNVRQVQCISFIAYKPAGF</sequence>
<accession>P24007</accession>
<proteinExistence type="evidence at transcript level"/>